<comment type="function">
    <text evidence="1">Catalyzes the formation of 4-diphosphocytidyl-2-C-methyl-D-erythritol from CTP and 2-C-methyl-D-erythritol 4-phosphate (MEP).</text>
</comment>
<comment type="catalytic activity">
    <reaction evidence="1">
        <text>2-C-methyl-D-erythritol 4-phosphate + CTP + H(+) = 4-CDP-2-C-methyl-D-erythritol + diphosphate</text>
        <dbReference type="Rhea" id="RHEA:13429"/>
        <dbReference type="ChEBI" id="CHEBI:15378"/>
        <dbReference type="ChEBI" id="CHEBI:33019"/>
        <dbReference type="ChEBI" id="CHEBI:37563"/>
        <dbReference type="ChEBI" id="CHEBI:57823"/>
        <dbReference type="ChEBI" id="CHEBI:58262"/>
        <dbReference type="EC" id="2.7.7.60"/>
    </reaction>
</comment>
<comment type="pathway">
    <text evidence="1">Isoprenoid biosynthesis; isopentenyl diphosphate biosynthesis via DXP pathway; isopentenyl diphosphate from 1-deoxy-D-xylulose 5-phosphate: step 2/6.</text>
</comment>
<comment type="similarity">
    <text evidence="1">Belongs to the IspD/TarI cytidylyltransferase family. IspD subfamily.</text>
</comment>
<evidence type="ECO:0000255" key="1">
    <source>
        <dbReference type="HAMAP-Rule" id="MF_00108"/>
    </source>
</evidence>
<dbReference type="EC" id="2.7.7.60" evidence="1"/>
<dbReference type="EMBL" id="CP000083">
    <property type="protein sequence ID" value="AAZ28021.1"/>
    <property type="molecule type" value="Genomic_DNA"/>
</dbReference>
<dbReference type="RefSeq" id="WP_011041910.1">
    <property type="nucleotide sequence ID" value="NC_003910.7"/>
</dbReference>
<dbReference type="SMR" id="Q487E9"/>
<dbReference type="STRING" id="167879.CPS_1072"/>
<dbReference type="KEGG" id="cps:CPS_1072"/>
<dbReference type="HOGENOM" id="CLU_061281_3_1_6"/>
<dbReference type="UniPathway" id="UPA00056">
    <property type="reaction ID" value="UER00093"/>
</dbReference>
<dbReference type="Proteomes" id="UP000000547">
    <property type="component" value="Chromosome"/>
</dbReference>
<dbReference type="GO" id="GO:0050518">
    <property type="term" value="F:2-C-methyl-D-erythritol 4-phosphate cytidylyltransferase activity"/>
    <property type="evidence" value="ECO:0007669"/>
    <property type="project" value="UniProtKB-UniRule"/>
</dbReference>
<dbReference type="GO" id="GO:0019288">
    <property type="term" value="P:isopentenyl diphosphate biosynthetic process, methylerythritol 4-phosphate pathway"/>
    <property type="evidence" value="ECO:0007669"/>
    <property type="project" value="UniProtKB-UniRule"/>
</dbReference>
<dbReference type="CDD" id="cd02516">
    <property type="entry name" value="CDP-ME_synthetase"/>
    <property type="match status" value="1"/>
</dbReference>
<dbReference type="FunFam" id="3.90.550.10:FF:000003">
    <property type="entry name" value="2-C-methyl-D-erythritol 4-phosphate cytidylyltransferase"/>
    <property type="match status" value="1"/>
</dbReference>
<dbReference type="Gene3D" id="3.90.550.10">
    <property type="entry name" value="Spore Coat Polysaccharide Biosynthesis Protein SpsA, Chain A"/>
    <property type="match status" value="1"/>
</dbReference>
<dbReference type="HAMAP" id="MF_00108">
    <property type="entry name" value="IspD"/>
    <property type="match status" value="1"/>
</dbReference>
<dbReference type="InterPro" id="IPR001228">
    <property type="entry name" value="IspD"/>
</dbReference>
<dbReference type="InterPro" id="IPR034683">
    <property type="entry name" value="IspD/TarI"/>
</dbReference>
<dbReference type="InterPro" id="IPR050088">
    <property type="entry name" value="IspD/TarI_cytidylyltransf_bact"/>
</dbReference>
<dbReference type="InterPro" id="IPR018294">
    <property type="entry name" value="ISPD_synthase_CS"/>
</dbReference>
<dbReference type="InterPro" id="IPR029044">
    <property type="entry name" value="Nucleotide-diphossugar_trans"/>
</dbReference>
<dbReference type="NCBIfam" id="TIGR00453">
    <property type="entry name" value="ispD"/>
    <property type="match status" value="1"/>
</dbReference>
<dbReference type="PANTHER" id="PTHR32125">
    <property type="entry name" value="2-C-METHYL-D-ERYTHRITOL 4-PHOSPHATE CYTIDYLYLTRANSFERASE, CHLOROPLASTIC"/>
    <property type="match status" value="1"/>
</dbReference>
<dbReference type="PANTHER" id="PTHR32125:SF4">
    <property type="entry name" value="2-C-METHYL-D-ERYTHRITOL 4-PHOSPHATE CYTIDYLYLTRANSFERASE, CHLOROPLASTIC"/>
    <property type="match status" value="1"/>
</dbReference>
<dbReference type="Pfam" id="PF01128">
    <property type="entry name" value="IspD"/>
    <property type="match status" value="1"/>
</dbReference>
<dbReference type="SUPFAM" id="SSF53448">
    <property type="entry name" value="Nucleotide-diphospho-sugar transferases"/>
    <property type="match status" value="1"/>
</dbReference>
<dbReference type="PROSITE" id="PS01295">
    <property type="entry name" value="ISPD"/>
    <property type="match status" value="1"/>
</dbReference>
<sequence>MASTLKFIVIVPAAGVGKRMQANCPKQYLRINNETILSHTVMRLLSHPLISQVIVALGTEDQYFAESELAHHKDIIRVNGGTERVNSVLNGLKAVDSDKYPWVLVHDAARPCVSHQDIDKLITRCLRKDYGGILATPVRDTMKRGVLIKDSAKGDNTIIESTVEREQLWHALTPQMYKTDELTLAIEQALENSLKITDEASAIEQANLPSLLVSASSENIKITHPNDLALAEFYLNKQANNTN</sequence>
<reference key="1">
    <citation type="journal article" date="2005" name="Proc. Natl. Acad. Sci. U.S.A.">
        <title>The psychrophilic lifestyle as revealed by the genome sequence of Colwellia psychrerythraea 34H through genomic and proteomic analyses.</title>
        <authorList>
            <person name="Methe B.A."/>
            <person name="Nelson K.E."/>
            <person name="Deming J.W."/>
            <person name="Momen B."/>
            <person name="Melamud E."/>
            <person name="Zhang X."/>
            <person name="Moult J."/>
            <person name="Madupu R."/>
            <person name="Nelson W.C."/>
            <person name="Dodson R.J."/>
            <person name="Brinkac L.M."/>
            <person name="Daugherty S.C."/>
            <person name="Durkin A.S."/>
            <person name="DeBoy R.T."/>
            <person name="Kolonay J.F."/>
            <person name="Sullivan S.A."/>
            <person name="Zhou L."/>
            <person name="Davidsen T.M."/>
            <person name="Wu M."/>
            <person name="Huston A.L."/>
            <person name="Lewis M."/>
            <person name="Weaver B."/>
            <person name="Weidman J.F."/>
            <person name="Khouri H."/>
            <person name="Utterback T.R."/>
            <person name="Feldblyum T.V."/>
            <person name="Fraser C.M."/>
        </authorList>
    </citation>
    <scope>NUCLEOTIDE SEQUENCE [LARGE SCALE GENOMIC DNA]</scope>
    <source>
        <strain>34H / ATCC BAA-681</strain>
    </source>
</reference>
<protein>
    <recommendedName>
        <fullName evidence="1">2-C-methyl-D-erythritol 4-phosphate cytidylyltransferase</fullName>
        <ecNumber evidence="1">2.7.7.60</ecNumber>
    </recommendedName>
    <alternativeName>
        <fullName evidence="1">4-diphosphocytidyl-2C-methyl-D-erythritol synthase</fullName>
    </alternativeName>
    <alternativeName>
        <fullName evidence="1">MEP cytidylyltransferase</fullName>
        <shortName evidence="1">MCT</shortName>
    </alternativeName>
</protein>
<organism>
    <name type="scientific">Colwellia psychrerythraea (strain 34H / ATCC BAA-681)</name>
    <name type="common">Vibrio psychroerythus</name>
    <dbReference type="NCBI Taxonomy" id="167879"/>
    <lineage>
        <taxon>Bacteria</taxon>
        <taxon>Pseudomonadati</taxon>
        <taxon>Pseudomonadota</taxon>
        <taxon>Gammaproteobacteria</taxon>
        <taxon>Alteromonadales</taxon>
        <taxon>Colwelliaceae</taxon>
        <taxon>Colwellia</taxon>
    </lineage>
</organism>
<keyword id="KW-0414">Isoprene biosynthesis</keyword>
<keyword id="KW-0548">Nucleotidyltransferase</keyword>
<keyword id="KW-0808">Transferase</keyword>
<proteinExistence type="inferred from homology"/>
<feature type="chain" id="PRO_0000237784" description="2-C-methyl-D-erythritol 4-phosphate cytidylyltransferase">
    <location>
        <begin position="1"/>
        <end position="243"/>
    </location>
</feature>
<feature type="site" description="Transition state stabilizer" evidence="1">
    <location>
        <position position="19"/>
    </location>
</feature>
<feature type="site" description="Transition state stabilizer" evidence="1">
    <location>
        <position position="26"/>
    </location>
</feature>
<feature type="site" description="Positions MEP for the nucleophilic attack" evidence="1">
    <location>
        <position position="165"/>
    </location>
</feature>
<feature type="site" description="Positions MEP for the nucleophilic attack" evidence="1">
    <location>
        <position position="221"/>
    </location>
</feature>
<accession>Q487E9</accession>
<name>ISPD_COLP3</name>
<gene>
    <name evidence="1" type="primary">ispD</name>
    <name type="ordered locus">CPS_1072</name>
</gene>